<gene>
    <name evidence="1" type="primary">psbF</name>
</gene>
<protein>
    <recommendedName>
        <fullName evidence="1">Cytochrome b559 subunit beta</fullName>
    </recommendedName>
    <alternativeName>
        <fullName evidence="1">PSII reaction center subunit VI</fullName>
    </alternativeName>
</protein>
<evidence type="ECO:0000255" key="1">
    <source>
        <dbReference type="HAMAP-Rule" id="MF_00643"/>
    </source>
</evidence>
<keyword id="KW-0150">Chloroplast</keyword>
<keyword id="KW-0249">Electron transport</keyword>
<keyword id="KW-0349">Heme</keyword>
<keyword id="KW-0408">Iron</keyword>
<keyword id="KW-0472">Membrane</keyword>
<keyword id="KW-0479">Metal-binding</keyword>
<keyword id="KW-0602">Photosynthesis</keyword>
<keyword id="KW-0604">Photosystem II</keyword>
<keyword id="KW-0934">Plastid</keyword>
<keyword id="KW-0793">Thylakoid</keyword>
<keyword id="KW-0812">Transmembrane</keyword>
<keyword id="KW-1133">Transmembrane helix</keyword>
<keyword id="KW-0813">Transport</keyword>
<accession>Q7J1B8</accession>
<accession>A8SEB9</accession>
<geneLocation type="chloroplast"/>
<organism>
    <name type="scientific">Ceratophyllum demersum</name>
    <name type="common">Rigid hornwort</name>
    <name type="synonym">Coontail</name>
    <dbReference type="NCBI Taxonomy" id="4428"/>
    <lineage>
        <taxon>Eukaryota</taxon>
        <taxon>Viridiplantae</taxon>
        <taxon>Streptophyta</taxon>
        <taxon>Embryophyta</taxon>
        <taxon>Tracheophyta</taxon>
        <taxon>Spermatophyta</taxon>
        <taxon>Magnoliopsida</taxon>
        <taxon>Ceratophyllales</taxon>
        <taxon>Ceratophyllaceae</taxon>
        <taxon>Ceratophyllum</taxon>
    </lineage>
</organism>
<name>PSBF_CERDE</name>
<feature type="chain" id="PRO_0000200370" description="Cytochrome b559 subunit beta">
    <location>
        <begin position="1"/>
        <end position="39"/>
    </location>
</feature>
<feature type="transmembrane region" description="Helical" evidence="1">
    <location>
        <begin position="14"/>
        <end position="30"/>
    </location>
</feature>
<feature type="binding site" description="axial binding residue" evidence="1">
    <location>
        <position position="18"/>
    </location>
    <ligand>
        <name>heme</name>
        <dbReference type="ChEBI" id="CHEBI:30413"/>
        <note>ligand shared with alpha subunit</note>
    </ligand>
    <ligandPart>
        <name>Fe</name>
        <dbReference type="ChEBI" id="CHEBI:18248"/>
    </ligandPart>
</feature>
<sequence length="39" mass="4424">MTIDRTYPIFTVRWLAVHGLAVPTVSFLGSISAMQFIQR</sequence>
<dbReference type="EMBL" id="AF123832">
    <property type="protein sequence ID" value="AAG26207.1"/>
    <property type="molecule type" value="Genomic_DNA"/>
</dbReference>
<dbReference type="EMBL" id="EF614270">
    <property type="protein sequence ID" value="ABQ81466.1"/>
    <property type="molecule type" value="Genomic_DNA"/>
</dbReference>
<dbReference type="RefSeq" id="YP_001542463.1">
    <property type="nucleotide sequence ID" value="NC_009962.1"/>
</dbReference>
<dbReference type="SMR" id="Q7J1B8"/>
<dbReference type="GeneID" id="5729461"/>
<dbReference type="GO" id="GO:0009535">
    <property type="term" value="C:chloroplast thylakoid membrane"/>
    <property type="evidence" value="ECO:0007669"/>
    <property type="project" value="UniProtKB-SubCell"/>
</dbReference>
<dbReference type="GO" id="GO:0009539">
    <property type="term" value="C:photosystem II reaction center"/>
    <property type="evidence" value="ECO:0007669"/>
    <property type="project" value="InterPro"/>
</dbReference>
<dbReference type="GO" id="GO:0009055">
    <property type="term" value="F:electron transfer activity"/>
    <property type="evidence" value="ECO:0007669"/>
    <property type="project" value="UniProtKB-UniRule"/>
</dbReference>
<dbReference type="GO" id="GO:0020037">
    <property type="term" value="F:heme binding"/>
    <property type="evidence" value="ECO:0007669"/>
    <property type="project" value="InterPro"/>
</dbReference>
<dbReference type="GO" id="GO:0005506">
    <property type="term" value="F:iron ion binding"/>
    <property type="evidence" value="ECO:0007669"/>
    <property type="project" value="UniProtKB-UniRule"/>
</dbReference>
<dbReference type="GO" id="GO:0009767">
    <property type="term" value="P:photosynthetic electron transport chain"/>
    <property type="evidence" value="ECO:0007669"/>
    <property type="project" value="InterPro"/>
</dbReference>
<dbReference type="HAMAP" id="MF_00643">
    <property type="entry name" value="PSII_PsbF"/>
    <property type="match status" value="1"/>
</dbReference>
<dbReference type="InterPro" id="IPR006241">
    <property type="entry name" value="PSII_cyt_b559_bsu"/>
</dbReference>
<dbReference type="InterPro" id="IPR006216">
    <property type="entry name" value="PSII_cyt_b559_CS"/>
</dbReference>
<dbReference type="InterPro" id="IPR013081">
    <property type="entry name" value="PSII_cyt_b559_N"/>
</dbReference>
<dbReference type="NCBIfam" id="TIGR01333">
    <property type="entry name" value="cyt_b559_beta"/>
    <property type="match status" value="1"/>
</dbReference>
<dbReference type="Pfam" id="PF00283">
    <property type="entry name" value="Cytochrom_B559"/>
    <property type="match status" value="1"/>
</dbReference>
<dbReference type="PIRSF" id="PIRSF000037">
    <property type="entry name" value="PsbF"/>
    <property type="match status" value="1"/>
</dbReference>
<dbReference type="SUPFAM" id="SSF161045">
    <property type="entry name" value="Cytochrome b559 subunits"/>
    <property type="match status" value="1"/>
</dbReference>
<dbReference type="PROSITE" id="PS00537">
    <property type="entry name" value="CYTOCHROME_B559"/>
    <property type="match status" value="1"/>
</dbReference>
<proteinExistence type="inferred from homology"/>
<reference key="1">
    <citation type="journal article" date="2000" name="Am. J. Bot.">
        <title>Utility of 17 chloroplast genes for inferring the phylogeny of the basal angiosperms.</title>
        <authorList>
            <person name="Graham S.W."/>
            <person name="Olmstead R.G."/>
        </authorList>
    </citation>
    <scope>NUCLEOTIDE SEQUENCE [GENOMIC DNA]</scope>
</reference>
<reference key="2">
    <citation type="journal article" date="2007" name="Proc. Natl. Acad. Sci. U.S.A.">
        <title>Using plastid genome-scale data to resolve enigmatic relationships among basal angiosperms.</title>
        <authorList>
            <person name="Moore M.J."/>
            <person name="Bell C.D."/>
            <person name="Soltis P.S."/>
            <person name="Soltis D.E."/>
        </authorList>
    </citation>
    <scope>NUCLEOTIDE SEQUENCE [LARGE SCALE GENOMIC DNA]</scope>
</reference>
<comment type="function">
    <text evidence="1">This b-type cytochrome is tightly associated with the reaction center of photosystem II (PSII). PSII is a light-driven water:plastoquinone oxidoreductase that uses light energy to abstract electrons from H(2)O, generating O(2) and a proton gradient subsequently used for ATP formation. It consists of a core antenna complex that captures photons, and an electron transfer chain that converts photonic excitation into a charge separation.</text>
</comment>
<comment type="cofactor">
    <cofactor evidence="1">
        <name>heme b</name>
        <dbReference type="ChEBI" id="CHEBI:60344"/>
    </cofactor>
    <text evidence="1">With its partner (PsbE) binds heme. PSII binds additional chlorophylls, carotenoids and specific lipids.</text>
</comment>
<comment type="subunit">
    <text evidence="1">Heterodimer of an alpha subunit and a beta subunit. PSII is composed of 1 copy each of membrane proteins PsbA, PsbB, PsbC, PsbD, PsbE, PsbF, PsbH, PsbI, PsbJ, PsbK, PsbL, PsbM, PsbT, PsbX, PsbY, PsbZ, Psb30/Ycf12, at least 3 peripheral proteins of the oxygen-evolving complex and a large number of cofactors. It forms dimeric complexes.</text>
</comment>
<comment type="subcellular location">
    <subcellularLocation>
        <location evidence="1">Plastid</location>
        <location evidence="1">Chloroplast thylakoid membrane</location>
        <topology evidence="1">Single-pass membrane protein</topology>
    </subcellularLocation>
</comment>
<comment type="similarity">
    <text evidence="1">Belongs to the PsbE/PsbF family.</text>
</comment>